<sequence>MFGLGLADVILERFKDFMREQPEPYKFLQVFYAQEKERFLNHKMSDYIKQNKSKEEASILARQGFVSAVGRALEKIIELLLKDFCIKNNVKMTNDKILRAKRINGELDRVKRALWVHFGEYSVLPDIILYQTNKDNIKILAILSVKNSFRERFTETPYWKLKLLQSPVTSHIKVFMITPDNDDEISFKDKPKG</sequence>
<keyword id="KW-0255">Endonuclease</keyword>
<keyword id="KW-0378">Hydrolase</keyword>
<keyword id="KW-0540">Nuclease</keyword>
<keyword id="KW-1185">Reference proteome</keyword>
<keyword id="KW-0680">Restriction system</keyword>
<protein>
    <recommendedName>
        <fullName evidence="1">Probable type II restriction enzyme HpyAORF263P</fullName>
        <shortName>HpyAORF263P</shortName>
        <ecNumber>3.1.21.4</ecNumber>
    </recommendedName>
    <alternativeName>
        <fullName>Endonuclease HpyAORF263P</fullName>
    </alternativeName>
    <alternativeName>
        <fullName>Type-2 restriction enzyme HpyAORF263P</fullName>
    </alternativeName>
</protein>
<dbReference type="EC" id="3.1.21.4"/>
<dbReference type="EMBL" id="AE000511">
    <property type="protein sequence ID" value="AAD07336.1"/>
    <property type="status" value="ALT_INIT"/>
    <property type="molecule type" value="Genomic_DNA"/>
</dbReference>
<dbReference type="PIR" id="F64552">
    <property type="entry name" value="F64552"/>
</dbReference>
<dbReference type="RefSeq" id="NP_207060.1">
    <property type="nucleotide sequence ID" value="NC_000915.1"/>
</dbReference>
<dbReference type="DIP" id="DIP-3315N"/>
<dbReference type="IntAct" id="O25042">
    <property type="interactions" value="3"/>
</dbReference>
<dbReference type="MINT" id="O25042"/>
<dbReference type="STRING" id="85962.HP_0262"/>
<dbReference type="REBASE" id="4213">
    <property type="entry name" value="HpyAORF263P"/>
</dbReference>
<dbReference type="PaxDb" id="85962-C694_01325"/>
<dbReference type="EnsemblBacteria" id="AAD07336">
    <property type="protein sequence ID" value="AAD07336"/>
    <property type="gene ID" value="HP_0262"/>
</dbReference>
<dbReference type="KEGG" id="hpy:HP_0262"/>
<dbReference type="PATRIC" id="fig|85962.8.peg.273"/>
<dbReference type="eggNOG" id="ENOG5031ACM">
    <property type="taxonomic scope" value="Bacteria"/>
</dbReference>
<dbReference type="InParanoid" id="O25042"/>
<dbReference type="OrthoDB" id="9810465at2"/>
<dbReference type="Proteomes" id="UP000000429">
    <property type="component" value="Chromosome"/>
</dbReference>
<dbReference type="GO" id="GO:0004519">
    <property type="term" value="F:endonuclease activity"/>
    <property type="evidence" value="ECO:0007669"/>
    <property type="project" value="UniProtKB-KW"/>
</dbReference>
<dbReference type="GO" id="GO:0009307">
    <property type="term" value="P:DNA restriction-modification system"/>
    <property type="evidence" value="ECO:0007669"/>
    <property type="project" value="UniProtKB-KW"/>
</dbReference>
<dbReference type="InterPro" id="IPR041551">
    <property type="entry name" value="RE_BsaWI"/>
</dbReference>
<dbReference type="Pfam" id="PF18643">
    <property type="entry name" value="RE_BsaWI"/>
    <property type="match status" value="1"/>
</dbReference>
<reference key="1">
    <citation type="journal article" date="1997" name="Nature">
        <title>The complete genome sequence of the gastric pathogen Helicobacter pylori.</title>
        <authorList>
            <person name="Tomb J.-F."/>
            <person name="White O."/>
            <person name="Kerlavage A.R."/>
            <person name="Clayton R.A."/>
            <person name="Sutton G.G."/>
            <person name="Fleischmann R.D."/>
            <person name="Ketchum K.A."/>
            <person name="Klenk H.-P."/>
            <person name="Gill S.R."/>
            <person name="Dougherty B.A."/>
            <person name="Nelson K.E."/>
            <person name="Quackenbush J."/>
            <person name="Zhou L."/>
            <person name="Kirkness E.F."/>
            <person name="Peterson S.N."/>
            <person name="Loftus B.J."/>
            <person name="Richardson D.L."/>
            <person name="Dodson R.J."/>
            <person name="Khalak H.G."/>
            <person name="Glodek A."/>
            <person name="McKenney K."/>
            <person name="FitzGerald L.M."/>
            <person name="Lee N."/>
            <person name="Adams M.D."/>
            <person name="Hickey E.K."/>
            <person name="Berg D.E."/>
            <person name="Gocayne J.D."/>
            <person name="Utterback T.R."/>
            <person name="Peterson J.D."/>
            <person name="Kelley J.M."/>
            <person name="Cotton M.D."/>
            <person name="Weidman J.F."/>
            <person name="Fujii C."/>
            <person name="Bowman C."/>
            <person name="Watthey L."/>
            <person name="Wallin E."/>
            <person name="Hayes W.S."/>
            <person name="Borodovsky M."/>
            <person name="Karp P.D."/>
            <person name="Smith H.O."/>
            <person name="Fraser C.M."/>
            <person name="Venter J.C."/>
        </authorList>
    </citation>
    <scope>NUCLEOTIDE SEQUENCE [LARGE SCALE GENOMIC DNA]</scope>
    <source>
        <strain>ATCC 700392 / 26695</strain>
    </source>
</reference>
<reference key="2">
    <citation type="journal article" date="2003" name="Nucleic Acids Res.">
        <title>A nomenclature for restriction enzymes, DNA methyltransferases, homing endonucleases and their genes.</title>
        <authorList>
            <person name="Roberts R.J."/>
            <person name="Belfort M."/>
            <person name="Bestor T."/>
            <person name="Bhagwat A.S."/>
            <person name="Bickle T.A."/>
            <person name="Bitinaite J."/>
            <person name="Blumenthal R.M."/>
            <person name="Degtyarev S.K."/>
            <person name="Dryden D.T."/>
            <person name="Dybvig K."/>
            <person name="Firman K."/>
            <person name="Gromova E.S."/>
            <person name="Gumport R.I."/>
            <person name="Halford S.E."/>
            <person name="Hattman S."/>
            <person name="Heitman J."/>
            <person name="Hornby D.P."/>
            <person name="Janulaitis A."/>
            <person name="Jeltsch A."/>
            <person name="Josephsen J."/>
            <person name="Kiss A."/>
            <person name="Klaenhammer T.R."/>
            <person name="Kobayashi I."/>
            <person name="Kong H."/>
            <person name="Krueger D.H."/>
            <person name="Lacks S."/>
            <person name="Marinus M.G."/>
            <person name="Miyahara M."/>
            <person name="Morgan R.D."/>
            <person name="Murray N.E."/>
            <person name="Nagaraja V."/>
            <person name="Piekarowicz A."/>
            <person name="Pingoud A."/>
            <person name="Raleigh E."/>
            <person name="Rao D.N."/>
            <person name="Reich N."/>
            <person name="Repin V.E."/>
            <person name="Selker E.U."/>
            <person name="Shaw P.C."/>
            <person name="Stein D.C."/>
            <person name="Stoddard B.L."/>
            <person name="Szybalski W."/>
            <person name="Trautner T.A."/>
            <person name="Van Etten J.L."/>
            <person name="Vitor J.M."/>
            <person name="Wilson G.G."/>
            <person name="Xu S.Y."/>
        </authorList>
    </citation>
    <scope>NOMENCLATURE</scope>
    <scope>SUBTYPE</scope>
</reference>
<accession>O25042</accession>
<feature type="chain" id="PRO_0000128680" description="Probable type II restriction enzyme HpyAORF263P">
    <location>
        <begin position="1"/>
        <end position="193"/>
    </location>
</feature>
<comment type="function">
    <text evidence="1">A P subtype probable restriction enzyme that recognizes the double-stranded sequence CCGG; the cleavage site is unknown.</text>
</comment>
<comment type="catalytic activity">
    <reaction>
        <text>Endonucleolytic cleavage of DNA to give specific double-stranded fragments with terminal 5'-phosphates.</text>
        <dbReference type="EC" id="3.1.21.4"/>
    </reaction>
</comment>
<comment type="similarity">
    <text evidence="2">Belongs to the BsaWI type II restriction endonuclease family.</text>
</comment>
<comment type="sequence caution" evidence="2">
    <conflict type="erroneous initiation">
        <sequence resource="EMBL-CDS" id="AAD07336"/>
    </conflict>
    <text>Extended N-terminus.</text>
</comment>
<proteinExistence type="inferred from homology"/>
<organism>
    <name type="scientific">Helicobacter pylori (strain ATCC 700392 / 26695)</name>
    <name type="common">Campylobacter pylori</name>
    <dbReference type="NCBI Taxonomy" id="85962"/>
    <lineage>
        <taxon>Bacteria</taxon>
        <taxon>Pseudomonadati</taxon>
        <taxon>Campylobacterota</taxon>
        <taxon>Epsilonproteobacteria</taxon>
        <taxon>Campylobacterales</taxon>
        <taxon>Helicobacteraceae</taxon>
        <taxon>Helicobacter</taxon>
    </lineage>
</organism>
<name>T2TA_HELPY</name>
<gene>
    <name evidence="2" type="primary">hpyAIR</name>
    <name type="ordered locus">HP_0262</name>
</gene>
<evidence type="ECO:0000303" key="1">
    <source>
    </source>
</evidence>
<evidence type="ECO:0000305" key="2"/>